<proteinExistence type="evidence at protein level"/>
<comment type="function">
    <text evidence="1">Has a role in meiosis.</text>
</comment>
<comment type="subcellular location">
    <subcellularLocation>
        <location evidence="2">Cytoplasm</location>
    </subcellularLocation>
    <subcellularLocation>
        <location evidence="2">Nucleus</location>
    </subcellularLocation>
</comment>
<comment type="similarity">
    <text evidence="3">Belongs to the UPF0612 family.</text>
</comment>
<gene>
    <name type="primary">mug2</name>
    <name type="ORF">SPBC106.08c</name>
</gene>
<accession>Q9URV3</accession>
<keyword id="KW-0963">Cytoplasm</keyword>
<keyword id="KW-0469">Meiosis</keyword>
<keyword id="KW-0539">Nucleus</keyword>
<keyword id="KW-1185">Reference proteome</keyword>
<name>MUG2_SCHPO</name>
<evidence type="ECO:0000269" key="1">
    <source>
    </source>
</evidence>
<evidence type="ECO:0000269" key="2">
    <source>
    </source>
</evidence>
<evidence type="ECO:0000305" key="3"/>
<feature type="chain" id="PRO_0000278484" description="Meiotically up-regulated gene 2 protein">
    <location>
        <begin position="1"/>
        <end position="296"/>
    </location>
</feature>
<dbReference type="EMBL" id="CU329671">
    <property type="protein sequence ID" value="CAB53724.1"/>
    <property type="molecule type" value="Genomic_DNA"/>
</dbReference>
<dbReference type="PIR" id="T39265">
    <property type="entry name" value="T39265"/>
</dbReference>
<dbReference type="RefSeq" id="NP_595157.1">
    <property type="nucleotide sequence ID" value="NM_001021066.2"/>
</dbReference>
<dbReference type="SMR" id="Q9URV3"/>
<dbReference type="BioGRID" id="276644">
    <property type="interactions" value="12"/>
</dbReference>
<dbReference type="STRING" id="284812.Q9URV3"/>
<dbReference type="iPTMnet" id="Q9URV3"/>
<dbReference type="PaxDb" id="4896-SPBC106.08c.1"/>
<dbReference type="EnsemblFungi" id="SPBC106.08c.1">
    <property type="protein sequence ID" value="SPBC106.08c.1:pep"/>
    <property type="gene ID" value="SPBC106.08c"/>
</dbReference>
<dbReference type="GeneID" id="2540107"/>
<dbReference type="KEGG" id="spo:2540107"/>
<dbReference type="PomBase" id="SPBC106.08c">
    <property type="gene designation" value="mug2"/>
</dbReference>
<dbReference type="VEuPathDB" id="FungiDB:SPBC106.08c"/>
<dbReference type="HOGENOM" id="CLU_940601_0_0_1"/>
<dbReference type="InParanoid" id="Q9URV3"/>
<dbReference type="PRO" id="PR:Q9URV3"/>
<dbReference type="Proteomes" id="UP000002485">
    <property type="component" value="Chromosome II"/>
</dbReference>
<dbReference type="GO" id="GO:0005829">
    <property type="term" value="C:cytosol"/>
    <property type="evidence" value="ECO:0007005"/>
    <property type="project" value="PomBase"/>
</dbReference>
<dbReference type="GO" id="GO:0005634">
    <property type="term" value="C:nucleus"/>
    <property type="evidence" value="ECO:0007005"/>
    <property type="project" value="PomBase"/>
</dbReference>
<dbReference type="GO" id="GO:0051321">
    <property type="term" value="P:meiotic cell cycle"/>
    <property type="evidence" value="ECO:0007669"/>
    <property type="project" value="UniProtKB-KW"/>
</dbReference>
<dbReference type="InterPro" id="IPR013902">
    <property type="entry name" value="Mug135-like_C"/>
</dbReference>
<dbReference type="Pfam" id="PF08593">
    <property type="entry name" value="Mug135_C"/>
    <property type="match status" value="1"/>
</dbReference>
<sequence length="296" mass="33846">MKKENWQKIENVYLLGKKIDKAKRMANKGESNTNMLSTEENIVKAKAVSRKKPVDVSYAGLARHESHVDTDYHGQALNTDNQDPKNYQARSFVKENELYESSQDCGHSRLAQILSEENQIKRLPQSDNTTTERIIENNPNYSNKPSKLKRALSGENSVFSIHQRNTLSPSSNLPRIPSDLYDIKQFLENLDARSFKSDMDLKRSQNMRRRATGYPAIVVPFLNGSLPQADLPPLRTIEDIDNLTREQCLTFIQGYGIPIDSSDTVYLKEKLRDAIGMRAFTDMSFEMNSFHLESPR</sequence>
<organism>
    <name type="scientific">Schizosaccharomyces pombe (strain 972 / ATCC 24843)</name>
    <name type="common">Fission yeast</name>
    <dbReference type="NCBI Taxonomy" id="284812"/>
    <lineage>
        <taxon>Eukaryota</taxon>
        <taxon>Fungi</taxon>
        <taxon>Dikarya</taxon>
        <taxon>Ascomycota</taxon>
        <taxon>Taphrinomycotina</taxon>
        <taxon>Schizosaccharomycetes</taxon>
        <taxon>Schizosaccharomycetales</taxon>
        <taxon>Schizosaccharomycetaceae</taxon>
        <taxon>Schizosaccharomyces</taxon>
    </lineage>
</organism>
<reference key="1">
    <citation type="journal article" date="2002" name="Nature">
        <title>The genome sequence of Schizosaccharomyces pombe.</title>
        <authorList>
            <person name="Wood V."/>
            <person name="Gwilliam R."/>
            <person name="Rajandream M.A."/>
            <person name="Lyne M.H."/>
            <person name="Lyne R."/>
            <person name="Stewart A."/>
            <person name="Sgouros J.G."/>
            <person name="Peat N."/>
            <person name="Hayles J."/>
            <person name="Baker S.G."/>
            <person name="Basham D."/>
            <person name="Bowman S."/>
            <person name="Brooks K."/>
            <person name="Brown D."/>
            <person name="Brown S."/>
            <person name="Chillingworth T."/>
            <person name="Churcher C.M."/>
            <person name="Collins M."/>
            <person name="Connor R."/>
            <person name="Cronin A."/>
            <person name="Davis P."/>
            <person name="Feltwell T."/>
            <person name="Fraser A."/>
            <person name="Gentles S."/>
            <person name="Goble A."/>
            <person name="Hamlin N."/>
            <person name="Harris D.E."/>
            <person name="Hidalgo J."/>
            <person name="Hodgson G."/>
            <person name="Holroyd S."/>
            <person name="Hornsby T."/>
            <person name="Howarth S."/>
            <person name="Huckle E.J."/>
            <person name="Hunt S."/>
            <person name="Jagels K."/>
            <person name="James K.D."/>
            <person name="Jones L."/>
            <person name="Jones M."/>
            <person name="Leather S."/>
            <person name="McDonald S."/>
            <person name="McLean J."/>
            <person name="Mooney P."/>
            <person name="Moule S."/>
            <person name="Mungall K.L."/>
            <person name="Murphy L.D."/>
            <person name="Niblett D."/>
            <person name="Odell C."/>
            <person name="Oliver K."/>
            <person name="O'Neil S."/>
            <person name="Pearson D."/>
            <person name="Quail M.A."/>
            <person name="Rabbinowitsch E."/>
            <person name="Rutherford K.M."/>
            <person name="Rutter S."/>
            <person name="Saunders D."/>
            <person name="Seeger K."/>
            <person name="Sharp S."/>
            <person name="Skelton J."/>
            <person name="Simmonds M.N."/>
            <person name="Squares R."/>
            <person name="Squares S."/>
            <person name="Stevens K."/>
            <person name="Taylor K."/>
            <person name="Taylor R.G."/>
            <person name="Tivey A."/>
            <person name="Walsh S.V."/>
            <person name="Warren T."/>
            <person name="Whitehead S."/>
            <person name="Woodward J.R."/>
            <person name="Volckaert G."/>
            <person name="Aert R."/>
            <person name="Robben J."/>
            <person name="Grymonprez B."/>
            <person name="Weltjens I."/>
            <person name="Vanstreels E."/>
            <person name="Rieger M."/>
            <person name="Schaefer M."/>
            <person name="Mueller-Auer S."/>
            <person name="Gabel C."/>
            <person name="Fuchs M."/>
            <person name="Duesterhoeft A."/>
            <person name="Fritzc C."/>
            <person name="Holzer E."/>
            <person name="Moestl D."/>
            <person name="Hilbert H."/>
            <person name="Borzym K."/>
            <person name="Langer I."/>
            <person name="Beck A."/>
            <person name="Lehrach H."/>
            <person name="Reinhardt R."/>
            <person name="Pohl T.M."/>
            <person name="Eger P."/>
            <person name="Zimmermann W."/>
            <person name="Wedler H."/>
            <person name="Wambutt R."/>
            <person name="Purnelle B."/>
            <person name="Goffeau A."/>
            <person name="Cadieu E."/>
            <person name="Dreano S."/>
            <person name="Gloux S."/>
            <person name="Lelaure V."/>
            <person name="Mottier S."/>
            <person name="Galibert F."/>
            <person name="Aves S.J."/>
            <person name="Xiang Z."/>
            <person name="Hunt C."/>
            <person name="Moore K."/>
            <person name="Hurst S.M."/>
            <person name="Lucas M."/>
            <person name="Rochet M."/>
            <person name="Gaillardin C."/>
            <person name="Tallada V.A."/>
            <person name="Garzon A."/>
            <person name="Thode G."/>
            <person name="Daga R.R."/>
            <person name="Cruzado L."/>
            <person name="Jimenez J."/>
            <person name="Sanchez M."/>
            <person name="del Rey F."/>
            <person name="Benito J."/>
            <person name="Dominguez A."/>
            <person name="Revuelta J.L."/>
            <person name="Moreno S."/>
            <person name="Armstrong J."/>
            <person name="Forsburg S.L."/>
            <person name="Cerutti L."/>
            <person name="Lowe T."/>
            <person name="McCombie W.R."/>
            <person name="Paulsen I."/>
            <person name="Potashkin J."/>
            <person name="Shpakovski G.V."/>
            <person name="Ussery D."/>
            <person name="Barrell B.G."/>
            <person name="Nurse P."/>
        </authorList>
    </citation>
    <scope>NUCLEOTIDE SEQUENCE [LARGE SCALE GENOMIC DNA]</scope>
    <source>
        <strain>972 / ATCC 24843</strain>
    </source>
</reference>
<reference key="2">
    <citation type="journal article" date="2005" name="Curr. Biol.">
        <title>A large-scale screen in S. pombe identifies seven novel genes required for critical meiotic events.</title>
        <authorList>
            <person name="Martin-Castellanos C."/>
            <person name="Blanco M."/>
            <person name="Rozalen A.E."/>
            <person name="Perez-Hidalgo L."/>
            <person name="Garcia A.I."/>
            <person name="Conde F."/>
            <person name="Mata J."/>
            <person name="Ellermeier C."/>
            <person name="Davis L."/>
            <person name="San-Segundo P."/>
            <person name="Smith G.R."/>
            <person name="Moreno S."/>
        </authorList>
    </citation>
    <scope>FUNCTION IN MEIOSIS</scope>
</reference>
<reference key="3">
    <citation type="journal article" date="2006" name="Nat. Biotechnol.">
        <title>ORFeome cloning and global analysis of protein localization in the fission yeast Schizosaccharomyces pombe.</title>
        <authorList>
            <person name="Matsuyama A."/>
            <person name="Arai R."/>
            <person name="Yashiroda Y."/>
            <person name="Shirai A."/>
            <person name="Kamata A."/>
            <person name="Sekido S."/>
            <person name="Kobayashi Y."/>
            <person name="Hashimoto A."/>
            <person name="Hamamoto M."/>
            <person name="Hiraoka Y."/>
            <person name="Horinouchi S."/>
            <person name="Yoshida M."/>
        </authorList>
    </citation>
    <scope>SUBCELLULAR LOCATION [LARGE SCALE ANALYSIS]</scope>
</reference>
<protein>
    <recommendedName>
        <fullName>Meiotically up-regulated gene 2 protein</fullName>
    </recommendedName>
</protein>